<feature type="signal peptide" evidence="3">
    <location>
        <begin position="1"/>
        <end position="16"/>
    </location>
</feature>
<feature type="chain" id="PRO_0000016564" description="Serine protease inhibitor Kazal-type 2">
    <location>
        <begin position="17"/>
        <end position="86"/>
    </location>
</feature>
<feature type="domain" description="Kazal-like" evidence="4">
    <location>
        <begin position="32"/>
        <end position="86"/>
    </location>
</feature>
<feature type="site" description="Reactive bond" evidence="4">
    <location>
        <begin position="48"/>
        <end position="49"/>
    </location>
</feature>
<feature type="disulfide bond" evidence="4">
    <location>
        <begin position="38"/>
        <end position="68"/>
    </location>
</feature>
<feature type="disulfide bond" evidence="4">
    <location>
        <begin position="46"/>
        <end position="65"/>
    </location>
</feature>
<feature type="disulfide bond" evidence="4">
    <location>
        <begin position="54"/>
        <end position="86"/>
    </location>
</feature>
<organism>
    <name type="scientific">Rattus norvegicus</name>
    <name type="common">Rat</name>
    <dbReference type="NCBI Taxonomy" id="10116"/>
    <lineage>
        <taxon>Eukaryota</taxon>
        <taxon>Metazoa</taxon>
        <taxon>Chordata</taxon>
        <taxon>Craniata</taxon>
        <taxon>Vertebrata</taxon>
        <taxon>Euteleostomi</taxon>
        <taxon>Mammalia</taxon>
        <taxon>Eutheria</taxon>
        <taxon>Euarchontoglires</taxon>
        <taxon>Glires</taxon>
        <taxon>Rodentia</taxon>
        <taxon>Myomorpha</taxon>
        <taxon>Muroidea</taxon>
        <taxon>Muridae</taxon>
        <taxon>Murinae</taxon>
        <taxon>Rattus</taxon>
    </lineage>
</organism>
<accession>Q6IE49</accession>
<sequence>MLRLVLLLLATDFAASDDSLDSSDSQLIKRSQFRTPDCHRFDYPVCSKHLSPVCGTDMNTYGNECTLCMKIREDGSHINIIKDEPC</sequence>
<evidence type="ECO:0000250" key="1">
    <source>
        <dbReference type="UniProtKB" id="P20155"/>
    </source>
</evidence>
<evidence type="ECO:0000250" key="2">
    <source>
        <dbReference type="UniProtKB" id="Q8BMY7"/>
    </source>
</evidence>
<evidence type="ECO:0000255" key="3"/>
<evidence type="ECO:0000255" key="4">
    <source>
        <dbReference type="PROSITE-ProRule" id="PRU00798"/>
    </source>
</evidence>
<reference key="1">
    <citation type="journal article" date="2004" name="Nature">
        <title>Genome sequence of the Brown Norway rat yields insights into mammalian evolution.</title>
        <authorList>
            <person name="Gibbs R.A."/>
            <person name="Weinstock G.M."/>
            <person name="Metzker M.L."/>
            <person name="Muzny D.M."/>
            <person name="Sodergren E.J."/>
            <person name="Scherer S."/>
            <person name="Scott G."/>
            <person name="Steffen D."/>
            <person name="Worley K.C."/>
            <person name="Burch P.E."/>
            <person name="Okwuonu G."/>
            <person name="Hines S."/>
            <person name="Lewis L."/>
            <person name="Deramo C."/>
            <person name="Delgado O."/>
            <person name="Dugan-Rocha S."/>
            <person name="Miner G."/>
            <person name="Morgan M."/>
            <person name="Hawes A."/>
            <person name="Gill R."/>
            <person name="Holt R.A."/>
            <person name="Adams M.D."/>
            <person name="Amanatides P.G."/>
            <person name="Baden-Tillson H."/>
            <person name="Barnstead M."/>
            <person name="Chin S."/>
            <person name="Evans C.A."/>
            <person name="Ferriera S."/>
            <person name="Fosler C."/>
            <person name="Glodek A."/>
            <person name="Gu Z."/>
            <person name="Jennings D."/>
            <person name="Kraft C.L."/>
            <person name="Nguyen T."/>
            <person name="Pfannkoch C.M."/>
            <person name="Sitter C."/>
            <person name="Sutton G.G."/>
            <person name="Venter J.C."/>
            <person name="Woodage T."/>
            <person name="Smith D."/>
            <person name="Lee H.-M."/>
            <person name="Gustafson E."/>
            <person name="Cahill P."/>
            <person name="Kana A."/>
            <person name="Doucette-Stamm L."/>
            <person name="Weinstock K."/>
            <person name="Fechtel K."/>
            <person name="Weiss R.B."/>
            <person name="Dunn D.M."/>
            <person name="Green E.D."/>
            <person name="Blakesley R.W."/>
            <person name="Bouffard G.G."/>
            <person name="De Jong P.J."/>
            <person name="Osoegawa K."/>
            <person name="Zhu B."/>
            <person name="Marra M."/>
            <person name="Schein J."/>
            <person name="Bosdet I."/>
            <person name="Fjell C."/>
            <person name="Jones S."/>
            <person name="Krzywinski M."/>
            <person name="Mathewson C."/>
            <person name="Siddiqui A."/>
            <person name="Wye N."/>
            <person name="McPherson J."/>
            <person name="Zhao S."/>
            <person name="Fraser C.M."/>
            <person name="Shetty J."/>
            <person name="Shatsman S."/>
            <person name="Geer K."/>
            <person name="Chen Y."/>
            <person name="Abramzon S."/>
            <person name="Nierman W.C."/>
            <person name="Havlak P.H."/>
            <person name="Chen R."/>
            <person name="Durbin K.J."/>
            <person name="Egan A."/>
            <person name="Ren Y."/>
            <person name="Song X.-Z."/>
            <person name="Li B."/>
            <person name="Liu Y."/>
            <person name="Qin X."/>
            <person name="Cawley S."/>
            <person name="Cooney A.J."/>
            <person name="D'Souza L.M."/>
            <person name="Martin K."/>
            <person name="Wu J.Q."/>
            <person name="Gonzalez-Garay M.L."/>
            <person name="Jackson A.R."/>
            <person name="Kalafus K.J."/>
            <person name="McLeod M.P."/>
            <person name="Milosavljevic A."/>
            <person name="Virk D."/>
            <person name="Volkov A."/>
            <person name="Wheeler D.A."/>
            <person name="Zhang Z."/>
            <person name="Bailey J.A."/>
            <person name="Eichler E.E."/>
            <person name="Tuzun E."/>
            <person name="Birney E."/>
            <person name="Mongin E."/>
            <person name="Ureta-Vidal A."/>
            <person name="Woodwark C."/>
            <person name="Zdobnov E."/>
            <person name="Bork P."/>
            <person name="Suyama M."/>
            <person name="Torrents D."/>
            <person name="Alexandersson M."/>
            <person name="Trask B.J."/>
            <person name="Young J.M."/>
            <person name="Huang H."/>
            <person name="Wang H."/>
            <person name="Xing H."/>
            <person name="Daniels S."/>
            <person name="Gietzen D."/>
            <person name="Schmidt J."/>
            <person name="Stevens K."/>
            <person name="Vitt U."/>
            <person name="Wingrove J."/>
            <person name="Camara F."/>
            <person name="Mar Alba M."/>
            <person name="Abril J.F."/>
            <person name="Guigo R."/>
            <person name="Smit A."/>
            <person name="Dubchak I."/>
            <person name="Rubin E.M."/>
            <person name="Couronne O."/>
            <person name="Poliakov A."/>
            <person name="Huebner N."/>
            <person name="Ganten D."/>
            <person name="Goesele C."/>
            <person name="Hummel O."/>
            <person name="Kreitler T."/>
            <person name="Lee Y.-A."/>
            <person name="Monti J."/>
            <person name="Schulz H."/>
            <person name="Zimdahl H."/>
            <person name="Himmelbauer H."/>
            <person name="Lehrach H."/>
            <person name="Jacob H.J."/>
            <person name="Bromberg S."/>
            <person name="Gullings-Handley J."/>
            <person name="Jensen-Seaman M.I."/>
            <person name="Kwitek A.E."/>
            <person name="Lazar J."/>
            <person name="Pasko D."/>
            <person name="Tonellato P.J."/>
            <person name="Twigger S."/>
            <person name="Ponting C.P."/>
            <person name="Duarte J.M."/>
            <person name="Rice S."/>
            <person name="Goodstadt L."/>
            <person name="Beatson S.A."/>
            <person name="Emes R.D."/>
            <person name="Winter E.E."/>
            <person name="Webber C."/>
            <person name="Brandt P."/>
            <person name="Nyakatura G."/>
            <person name="Adetobi M."/>
            <person name="Chiaromonte F."/>
            <person name="Elnitski L."/>
            <person name="Eswara P."/>
            <person name="Hardison R.C."/>
            <person name="Hou M."/>
            <person name="Kolbe D."/>
            <person name="Makova K."/>
            <person name="Miller W."/>
            <person name="Nekrutenko A."/>
            <person name="Riemer C."/>
            <person name="Schwartz S."/>
            <person name="Taylor J."/>
            <person name="Yang S."/>
            <person name="Zhang Y."/>
            <person name="Lindpaintner K."/>
            <person name="Andrews T.D."/>
            <person name="Caccamo M."/>
            <person name="Clamp M."/>
            <person name="Clarke L."/>
            <person name="Curwen V."/>
            <person name="Durbin R.M."/>
            <person name="Eyras E."/>
            <person name="Searle S.M."/>
            <person name="Cooper G.M."/>
            <person name="Batzoglou S."/>
            <person name="Brudno M."/>
            <person name="Sidow A."/>
            <person name="Stone E.A."/>
            <person name="Payseur B.A."/>
            <person name="Bourque G."/>
            <person name="Lopez-Otin C."/>
            <person name="Puente X.S."/>
            <person name="Chakrabarti K."/>
            <person name="Chatterji S."/>
            <person name="Dewey C."/>
            <person name="Pachter L."/>
            <person name="Bray N."/>
            <person name="Yap V.B."/>
            <person name="Caspi A."/>
            <person name="Tesler G."/>
            <person name="Pevzner P.A."/>
            <person name="Haussler D."/>
            <person name="Roskin K.M."/>
            <person name="Baertsch R."/>
            <person name="Clawson H."/>
            <person name="Furey T.S."/>
            <person name="Hinrichs A.S."/>
            <person name="Karolchik D."/>
            <person name="Kent W.J."/>
            <person name="Rosenbloom K.R."/>
            <person name="Trumbower H."/>
            <person name="Weirauch M."/>
            <person name="Cooper D.N."/>
            <person name="Stenson P.D."/>
            <person name="Ma B."/>
            <person name="Brent M."/>
            <person name="Arumugam M."/>
            <person name="Shteynberg D."/>
            <person name="Copley R.R."/>
            <person name="Taylor M.S."/>
            <person name="Riethman H."/>
            <person name="Mudunuri U."/>
            <person name="Peterson J."/>
            <person name="Guyer M."/>
            <person name="Felsenfeld A."/>
            <person name="Old S."/>
            <person name="Mockrin S."/>
            <person name="Collins F.S."/>
        </authorList>
    </citation>
    <scope>NUCLEOTIDE SEQUENCE [LARGE SCALE GENOMIC DNA]</scope>
    <source>
        <strain>Brown Norway</strain>
    </source>
</reference>
<reference key="2">
    <citation type="journal article" date="2004" name="Genome Res.">
        <title>A genomic analysis of rat proteases and protease inhibitors.</title>
        <authorList>
            <person name="Puente X.S."/>
            <person name="Lopez-Otin C."/>
        </authorList>
    </citation>
    <scope>IDENTIFICATION</scope>
</reference>
<dbReference type="EMBL" id="AC097433">
    <property type="status" value="NOT_ANNOTATED_CDS"/>
    <property type="molecule type" value="Genomic_DNA"/>
</dbReference>
<dbReference type="EMBL" id="BN000344">
    <property type="protein sequence ID" value="CAE51396.1"/>
    <property type="molecule type" value="mRNA"/>
</dbReference>
<dbReference type="RefSeq" id="NP_001008870.1">
    <property type="nucleotide sequence ID" value="NM_001008870.2"/>
</dbReference>
<dbReference type="RefSeq" id="XP_003751398.1">
    <property type="nucleotide sequence ID" value="XM_003751350.4"/>
</dbReference>
<dbReference type="SMR" id="Q6IE49"/>
<dbReference type="FunCoup" id="Q6IE49">
    <property type="interactions" value="12"/>
</dbReference>
<dbReference type="STRING" id="10116.ENSRNOP00000040692"/>
<dbReference type="MEROPS" id="I01.012"/>
<dbReference type="PhosphoSitePlus" id="Q6IE49"/>
<dbReference type="PaxDb" id="10116-ENSRNOP00000040692"/>
<dbReference type="GeneID" id="408234"/>
<dbReference type="KEGG" id="rno:408234"/>
<dbReference type="UCSC" id="RGD:1302956">
    <property type="organism name" value="rat"/>
</dbReference>
<dbReference type="AGR" id="RGD:1302956"/>
<dbReference type="CTD" id="6691"/>
<dbReference type="RGD" id="1302956">
    <property type="gene designation" value="Spink2"/>
</dbReference>
<dbReference type="eggNOG" id="KOG3649">
    <property type="taxonomic scope" value="Eukaryota"/>
</dbReference>
<dbReference type="HOGENOM" id="CLU_169765_2_0_1"/>
<dbReference type="InParanoid" id="Q6IE49"/>
<dbReference type="OrthoDB" id="66494at9989"/>
<dbReference type="PhylomeDB" id="Q6IE49"/>
<dbReference type="PRO" id="PR:Q6IE49"/>
<dbReference type="Proteomes" id="UP000002494">
    <property type="component" value="Chromosome 14"/>
</dbReference>
<dbReference type="Bgee" id="ENSRNOG00000031710">
    <property type="expression patterns" value="Expressed in testis and 11 other cell types or tissues"/>
</dbReference>
<dbReference type="GO" id="GO:0001669">
    <property type="term" value="C:acrosomal vesicle"/>
    <property type="evidence" value="ECO:0000250"/>
    <property type="project" value="UniProtKB"/>
</dbReference>
<dbReference type="GO" id="GO:0005737">
    <property type="term" value="C:cytoplasm"/>
    <property type="evidence" value="ECO:0000266"/>
    <property type="project" value="RGD"/>
</dbReference>
<dbReference type="GO" id="GO:0005576">
    <property type="term" value="C:extracellular region"/>
    <property type="evidence" value="ECO:0007669"/>
    <property type="project" value="UniProtKB-SubCell"/>
</dbReference>
<dbReference type="GO" id="GO:0043005">
    <property type="term" value="C:neuron projection"/>
    <property type="evidence" value="ECO:0000266"/>
    <property type="project" value="RGD"/>
</dbReference>
<dbReference type="GO" id="GO:0004867">
    <property type="term" value="F:serine-type endopeptidase inhibitor activity"/>
    <property type="evidence" value="ECO:0007669"/>
    <property type="project" value="UniProtKB-KW"/>
</dbReference>
<dbReference type="GO" id="GO:0001675">
    <property type="term" value="P:acrosome assembly"/>
    <property type="evidence" value="ECO:0000250"/>
    <property type="project" value="UniProtKB"/>
</dbReference>
<dbReference type="GO" id="GO:0009566">
    <property type="term" value="P:fertilization"/>
    <property type="evidence" value="ECO:0000266"/>
    <property type="project" value="RGD"/>
</dbReference>
<dbReference type="GO" id="GO:0002176">
    <property type="term" value="P:male germ cell proliferation"/>
    <property type="evidence" value="ECO:0000266"/>
    <property type="project" value="RGD"/>
</dbReference>
<dbReference type="GO" id="GO:0008584">
    <property type="term" value="P:male gonad development"/>
    <property type="evidence" value="ECO:0000266"/>
    <property type="project" value="RGD"/>
</dbReference>
<dbReference type="GO" id="GO:0043065">
    <property type="term" value="P:positive regulation of apoptotic process"/>
    <property type="evidence" value="ECO:0000266"/>
    <property type="project" value="RGD"/>
</dbReference>
<dbReference type="GO" id="GO:0072520">
    <property type="term" value="P:seminiferous tubule development"/>
    <property type="evidence" value="ECO:0000266"/>
    <property type="project" value="RGD"/>
</dbReference>
<dbReference type="GO" id="GO:0007286">
    <property type="term" value="P:spermatid development"/>
    <property type="evidence" value="ECO:0000250"/>
    <property type="project" value="UniProtKB"/>
</dbReference>
<dbReference type="GO" id="GO:0007283">
    <property type="term" value="P:spermatogenesis"/>
    <property type="evidence" value="ECO:0000266"/>
    <property type="project" value="RGD"/>
</dbReference>
<dbReference type="FunFam" id="3.30.60.30:FF:000031">
    <property type="entry name" value="Serine protease inhibitor Kazal-type 2"/>
    <property type="match status" value="1"/>
</dbReference>
<dbReference type="Gene3D" id="3.30.60.30">
    <property type="match status" value="1"/>
</dbReference>
<dbReference type="InterPro" id="IPR002350">
    <property type="entry name" value="Kazal_dom"/>
</dbReference>
<dbReference type="InterPro" id="IPR036058">
    <property type="entry name" value="Kazal_dom_sf"/>
</dbReference>
<dbReference type="InterPro" id="IPR042167">
    <property type="entry name" value="SPINK2"/>
</dbReference>
<dbReference type="PANTHER" id="PTHR47608:SF1">
    <property type="entry name" value="SERINE PROTEASE INHIBITOR KAZAL-TYPE 2"/>
    <property type="match status" value="1"/>
</dbReference>
<dbReference type="PANTHER" id="PTHR47608">
    <property type="entry name" value="SERINE PROTEASE INHIBITOR KAZAL-TYPE 2, SPINK2"/>
    <property type="match status" value="1"/>
</dbReference>
<dbReference type="Pfam" id="PF00050">
    <property type="entry name" value="Kazal_1"/>
    <property type="match status" value="1"/>
</dbReference>
<dbReference type="SMART" id="SM00280">
    <property type="entry name" value="KAZAL"/>
    <property type="match status" value="1"/>
</dbReference>
<dbReference type="SUPFAM" id="SSF100895">
    <property type="entry name" value="Kazal-type serine protease inhibitors"/>
    <property type="match status" value="1"/>
</dbReference>
<dbReference type="PROSITE" id="PS00282">
    <property type="entry name" value="KAZAL_1"/>
    <property type="match status" value="1"/>
</dbReference>
<dbReference type="PROSITE" id="PS51465">
    <property type="entry name" value="KAZAL_2"/>
    <property type="match status" value="1"/>
</dbReference>
<comment type="function">
    <text evidence="2">As a strong inhibitor of acrosin, it is required for normal spermiogenesis. It probably hinders premature activation of proacrosin and other proteases, thus preventing the cascade of events leading to spermiogenesis defects. May be involved in the regulation of serine protease-dependent germ cell apoptosis. It also inhibits trypsin.</text>
</comment>
<comment type="subcellular location">
    <subcellularLocation>
        <location evidence="1">Secreted</location>
    </subcellularLocation>
    <subcellularLocation>
        <location evidence="2">Cytoplasmic vesicle</location>
        <location evidence="2">Secretory vesicle</location>
        <location evidence="2">Acrosome</location>
    </subcellularLocation>
</comment>
<keyword id="KW-0968">Cytoplasmic vesicle</keyword>
<keyword id="KW-1015">Disulfide bond</keyword>
<keyword id="KW-0646">Protease inhibitor</keyword>
<keyword id="KW-1185">Reference proteome</keyword>
<keyword id="KW-0964">Secreted</keyword>
<keyword id="KW-0722">Serine protease inhibitor</keyword>
<keyword id="KW-0732">Signal</keyword>
<proteinExistence type="inferred from homology"/>
<name>ISK2_RAT</name>
<gene>
    <name type="primary">Spink2</name>
</gene>
<protein>
    <recommendedName>
        <fullName>Serine protease inhibitor Kazal-type 2</fullName>
    </recommendedName>
</protein>